<comment type="function">
    <text evidence="1">Binds the lower part of the 30S subunit head. Binds mRNA in the 70S ribosome, positioning it for translation.</text>
</comment>
<comment type="subunit">
    <text evidence="1">Part of the 30S ribosomal subunit. Forms a tight complex with proteins S10 and S14.</text>
</comment>
<comment type="similarity">
    <text evidence="1">Belongs to the universal ribosomal protein uS3 family.</text>
</comment>
<feature type="chain" id="PRO_1000165499" description="Small ribosomal subunit protein uS3">
    <location>
        <begin position="1"/>
        <end position="233"/>
    </location>
</feature>
<feature type="domain" description="KH type-2" evidence="1">
    <location>
        <begin position="39"/>
        <end position="107"/>
    </location>
</feature>
<feature type="region of interest" description="Disordered" evidence="2">
    <location>
        <begin position="209"/>
        <end position="233"/>
    </location>
</feature>
<sequence length="233" mass="26202">MGQKIDPRGFRLAVTRNWSSKWFANSQNFPGMLKEDIDVREFLKAKLKNASVSRITIERPAKSARITIHTARPGVVIGKKGEDIEVLKQELQKRMGVPVHVNIEEVRKPEIDAQIIADGIASQLEKRVMFRRAMKRAMQNAMRLGALGIKIMSSGRLNGIEIARTEWYREGRVPLHTLRADVDYATSEAHTTYGVIGIKVWVYKGDMKPGQVSAEPTQPEKKMRKGGRNAAAN</sequence>
<proteinExistence type="inferred from homology"/>
<reference key="1">
    <citation type="journal article" date="2009" name="PLoS Genet.">
        <title>The complete genome and proteome of Laribacter hongkongensis reveal potential mechanisms for adaptations to different temperatures and habitats.</title>
        <authorList>
            <person name="Woo P.C.Y."/>
            <person name="Lau S.K.P."/>
            <person name="Tse H."/>
            <person name="Teng J.L.L."/>
            <person name="Curreem S.O."/>
            <person name="Tsang A.K.L."/>
            <person name="Fan R.Y.Y."/>
            <person name="Wong G.K.M."/>
            <person name="Huang Y."/>
            <person name="Loman N.J."/>
            <person name="Snyder L.A.S."/>
            <person name="Cai J.J."/>
            <person name="Huang J.-D."/>
            <person name="Mak W."/>
            <person name="Pallen M.J."/>
            <person name="Lok S."/>
            <person name="Yuen K.-Y."/>
        </authorList>
    </citation>
    <scope>NUCLEOTIDE SEQUENCE [LARGE SCALE GENOMIC DNA]</scope>
    <source>
        <strain>HLHK9</strain>
    </source>
</reference>
<organism>
    <name type="scientific">Laribacter hongkongensis (strain HLHK9)</name>
    <dbReference type="NCBI Taxonomy" id="557598"/>
    <lineage>
        <taxon>Bacteria</taxon>
        <taxon>Pseudomonadati</taxon>
        <taxon>Pseudomonadota</taxon>
        <taxon>Betaproteobacteria</taxon>
        <taxon>Neisseriales</taxon>
        <taxon>Aquaspirillaceae</taxon>
        <taxon>Laribacter</taxon>
    </lineage>
</organism>
<keyword id="KW-1185">Reference proteome</keyword>
<keyword id="KW-0687">Ribonucleoprotein</keyword>
<keyword id="KW-0689">Ribosomal protein</keyword>
<keyword id="KW-0694">RNA-binding</keyword>
<keyword id="KW-0699">rRNA-binding</keyword>
<evidence type="ECO:0000255" key="1">
    <source>
        <dbReference type="HAMAP-Rule" id="MF_01309"/>
    </source>
</evidence>
<evidence type="ECO:0000256" key="2">
    <source>
        <dbReference type="SAM" id="MobiDB-lite"/>
    </source>
</evidence>
<evidence type="ECO:0000305" key="3"/>
<dbReference type="EMBL" id="CP001154">
    <property type="protein sequence ID" value="ACO73254.1"/>
    <property type="molecule type" value="Genomic_DNA"/>
</dbReference>
<dbReference type="RefSeq" id="WP_012695748.1">
    <property type="nucleotide sequence ID" value="NC_012559.1"/>
</dbReference>
<dbReference type="SMR" id="C1DAS3"/>
<dbReference type="STRING" id="557598.LHK_00259"/>
<dbReference type="GeneID" id="75109501"/>
<dbReference type="KEGG" id="lhk:LHK_00259"/>
<dbReference type="eggNOG" id="COG0092">
    <property type="taxonomic scope" value="Bacteria"/>
</dbReference>
<dbReference type="HOGENOM" id="CLU_058591_0_2_4"/>
<dbReference type="Proteomes" id="UP000002010">
    <property type="component" value="Chromosome"/>
</dbReference>
<dbReference type="GO" id="GO:0022627">
    <property type="term" value="C:cytosolic small ribosomal subunit"/>
    <property type="evidence" value="ECO:0007669"/>
    <property type="project" value="TreeGrafter"/>
</dbReference>
<dbReference type="GO" id="GO:0003729">
    <property type="term" value="F:mRNA binding"/>
    <property type="evidence" value="ECO:0007669"/>
    <property type="project" value="UniProtKB-UniRule"/>
</dbReference>
<dbReference type="GO" id="GO:0019843">
    <property type="term" value="F:rRNA binding"/>
    <property type="evidence" value="ECO:0007669"/>
    <property type="project" value="UniProtKB-UniRule"/>
</dbReference>
<dbReference type="GO" id="GO:0003735">
    <property type="term" value="F:structural constituent of ribosome"/>
    <property type="evidence" value="ECO:0007669"/>
    <property type="project" value="InterPro"/>
</dbReference>
<dbReference type="GO" id="GO:0006412">
    <property type="term" value="P:translation"/>
    <property type="evidence" value="ECO:0007669"/>
    <property type="project" value="UniProtKB-UniRule"/>
</dbReference>
<dbReference type="CDD" id="cd02412">
    <property type="entry name" value="KH-II_30S_S3"/>
    <property type="match status" value="1"/>
</dbReference>
<dbReference type="FunFam" id="3.30.1140.32:FF:000006">
    <property type="entry name" value="30S ribosomal protein S3"/>
    <property type="match status" value="1"/>
</dbReference>
<dbReference type="FunFam" id="3.30.300.20:FF:000001">
    <property type="entry name" value="30S ribosomal protein S3"/>
    <property type="match status" value="1"/>
</dbReference>
<dbReference type="Gene3D" id="3.30.300.20">
    <property type="match status" value="1"/>
</dbReference>
<dbReference type="Gene3D" id="3.30.1140.32">
    <property type="entry name" value="Ribosomal protein S3, C-terminal domain"/>
    <property type="match status" value="1"/>
</dbReference>
<dbReference type="HAMAP" id="MF_01309_B">
    <property type="entry name" value="Ribosomal_uS3_B"/>
    <property type="match status" value="1"/>
</dbReference>
<dbReference type="InterPro" id="IPR004087">
    <property type="entry name" value="KH_dom"/>
</dbReference>
<dbReference type="InterPro" id="IPR015946">
    <property type="entry name" value="KH_dom-like_a/b"/>
</dbReference>
<dbReference type="InterPro" id="IPR004044">
    <property type="entry name" value="KH_dom_type_2"/>
</dbReference>
<dbReference type="InterPro" id="IPR009019">
    <property type="entry name" value="KH_sf_prok-type"/>
</dbReference>
<dbReference type="InterPro" id="IPR036419">
    <property type="entry name" value="Ribosomal_S3_C_sf"/>
</dbReference>
<dbReference type="InterPro" id="IPR005704">
    <property type="entry name" value="Ribosomal_uS3_bac-typ"/>
</dbReference>
<dbReference type="InterPro" id="IPR001351">
    <property type="entry name" value="Ribosomal_uS3_C"/>
</dbReference>
<dbReference type="InterPro" id="IPR018280">
    <property type="entry name" value="Ribosomal_uS3_CS"/>
</dbReference>
<dbReference type="NCBIfam" id="TIGR01009">
    <property type="entry name" value="rpsC_bact"/>
    <property type="match status" value="1"/>
</dbReference>
<dbReference type="PANTHER" id="PTHR11760">
    <property type="entry name" value="30S/40S RIBOSOMAL PROTEIN S3"/>
    <property type="match status" value="1"/>
</dbReference>
<dbReference type="PANTHER" id="PTHR11760:SF19">
    <property type="entry name" value="SMALL RIBOSOMAL SUBUNIT PROTEIN US3C"/>
    <property type="match status" value="1"/>
</dbReference>
<dbReference type="Pfam" id="PF07650">
    <property type="entry name" value="KH_2"/>
    <property type="match status" value="1"/>
</dbReference>
<dbReference type="Pfam" id="PF00189">
    <property type="entry name" value="Ribosomal_S3_C"/>
    <property type="match status" value="1"/>
</dbReference>
<dbReference type="SMART" id="SM00322">
    <property type="entry name" value="KH"/>
    <property type="match status" value="1"/>
</dbReference>
<dbReference type="SUPFAM" id="SSF54814">
    <property type="entry name" value="Prokaryotic type KH domain (KH-domain type II)"/>
    <property type="match status" value="1"/>
</dbReference>
<dbReference type="SUPFAM" id="SSF54821">
    <property type="entry name" value="Ribosomal protein S3 C-terminal domain"/>
    <property type="match status" value="1"/>
</dbReference>
<dbReference type="PROSITE" id="PS50823">
    <property type="entry name" value="KH_TYPE_2"/>
    <property type="match status" value="1"/>
</dbReference>
<dbReference type="PROSITE" id="PS00548">
    <property type="entry name" value="RIBOSOMAL_S3"/>
    <property type="match status" value="1"/>
</dbReference>
<accession>C1DAS3</accession>
<protein>
    <recommendedName>
        <fullName evidence="1">Small ribosomal subunit protein uS3</fullName>
    </recommendedName>
    <alternativeName>
        <fullName evidence="3">30S ribosomal protein S3</fullName>
    </alternativeName>
</protein>
<gene>
    <name evidence="1" type="primary">rpsC</name>
    <name type="ordered locus">LHK_00259</name>
</gene>
<name>RS3_LARHH</name>